<sequence length="358" mass="37912">MSTQNTNAQNLSFVLEGIHRVKFEDRPIPEINNPHDVLVNVRFTGICGSDVHYWEHGSIGQFIVKDPMVLGHESSGVVSKVGSAVTSLKVGDCVAMEPGIPCRRCEPCKAGKYNLCVKMAFAATPPYDGTLAKYYVLPEDFCYKLPESITLQEGAIMEPLSVAVHIVKQAGINPGQSVVVFGAGPVGLLCCAVAKAYGASKVIAVDIQKGRLDFAKKYAATATFEPAKAAALENAQRIITENDLGSGADVAIDASGAEPSVHTGIHVLRAGGTYVQGGMGRSEITFPIMAACTKELNVKGSFRYGSGDYKLAVSLVSAGKVNVKELITGVVKFEDAERAFEEVRAGKGIKTLIAGVDS</sequence>
<feature type="chain" id="PRO_0000393510" description="D-xylulose reductase A">
    <location>
        <begin position="1"/>
        <end position="358"/>
    </location>
</feature>
<feature type="binding site" evidence="1">
    <location>
        <position position="47"/>
    </location>
    <ligand>
        <name>Zn(2+)</name>
        <dbReference type="ChEBI" id="CHEBI:29105"/>
        <note>catalytic</note>
    </ligand>
</feature>
<feature type="binding site" evidence="1">
    <location>
        <position position="72"/>
    </location>
    <ligand>
        <name>Zn(2+)</name>
        <dbReference type="ChEBI" id="CHEBI:29105"/>
        <note>catalytic</note>
    </ligand>
</feature>
<feature type="binding site" evidence="1">
    <location>
        <position position="73"/>
    </location>
    <ligand>
        <name>Zn(2+)</name>
        <dbReference type="ChEBI" id="CHEBI:29105"/>
        <note>catalytic</note>
    </ligand>
</feature>
<feature type="binding site" evidence="2">
    <location>
        <begin position="182"/>
        <end position="187"/>
    </location>
    <ligand>
        <name>NAD(+)</name>
        <dbReference type="ChEBI" id="CHEBI:57540"/>
    </ligand>
</feature>
<reference key="1">
    <citation type="submission" date="2004-11" db="EMBL/GenBank/DDBJ databases">
        <title>Diversity in regulation and substrate specificity of the pentose catabolic pathway genes/enzymes of Aspergillus niger.</title>
        <authorList>
            <person name="de Groot M.J.L."/>
            <person name="Vandeputte-Rutten L."/>
            <person name="van den Dool C."/>
            <person name="Woesten H.A.B."/>
            <person name="Levisson M."/>
            <person name="vanKuyk P.A."/>
            <person name="Ruijter G.J.G."/>
            <person name="de Vries R.P."/>
        </authorList>
    </citation>
    <scope>NUCLEOTIDE SEQUENCE [GENOMIC DNA]</scope>
    <source>
        <strain>CBS 513.88</strain>
    </source>
</reference>
<evidence type="ECO:0000250" key="1"/>
<evidence type="ECO:0000255" key="2"/>
<evidence type="ECO:0000305" key="3"/>
<accession>Q5GN51</accession>
<gene>
    <name type="primary">xdhA</name>
</gene>
<keyword id="KW-0119">Carbohydrate metabolism</keyword>
<keyword id="KW-0479">Metal-binding</keyword>
<keyword id="KW-0520">NAD</keyword>
<keyword id="KW-0560">Oxidoreductase</keyword>
<keyword id="KW-0859">Xylose metabolism</keyword>
<keyword id="KW-0862">Zinc</keyword>
<name>XYL2_ASPNG</name>
<dbReference type="EC" id="1.1.1.9"/>
<dbReference type="EMBL" id="AJ854041">
    <property type="protein sequence ID" value="CAH69384.1"/>
    <property type="molecule type" value="Genomic_DNA"/>
</dbReference>
<dbReference type="RefSeq" id="XP_001395093.1">
    <property type="nucleotide sequence ID" value="XM_001395056.2"/>
</dbReference>
<dbReference type="SMR" id="Q5GN51"/>
<dbReference type="PaxDb" id="5061-CADANGAP00009275"/>
<dbReference type="EnsemblFungi" id="CAK40934">
    <property type="protein sequence ID" value="CAK40934"/>
    <property type="gene ID" value="An12g00030"/>
</dbReference>
<dbReference type="KEGG" id="ang:An12g00030"/>
<dbReference type="VEuPathDB" id="FungiDB:An12g00030"/>
<dbReference type="VEuPathDB" id="FungiDB:ASPNIDRAFT2_1143012"/>
<dbReference type="VEuPathDB" id="FungiDB:ATCC64974_39060"/>
<dbReference type="VEuPathDB" id="FungiDB:M747DRAFT_293400"/>
<dbReference type="eggNOG" id="KOG0024">
    <property type="taxonomic scope" value="Eukaryota"/>
</dbReference>
<dbReference type="OrthoDB" id="3941538at2759"/>
<dbReference type="BioCyc" id="MetaCyc:MONOMER-21872"/>
<dbReference type="UniPathway" id="UPA00146">
    <property type="reaction ID" value="UER00577"/>
</dbReference>
<dbReference type="GO" id="GO:0046526">
    <property type="term" value="F:D-xylulose reductase activity"/>
    <property type="evidence" value="ECO:0007669"/>
    <property type="project" value="UniProtKB-EC"/>
</dbReference>
<dbReference type="GO" id="GO:0003939">
    <property type="term" value="F:L-iditol 2-dehydrogenase (NAD+) activity"/>
    <property type="evidence" value="ECO:0007669"/>
    <property type="project" value="TreeGrafter"/>
</dbReference>
<dbReference type="GO" id="GO:0008270">
    <property type="term" value="F:zinc ion binding"/>
    <property type="evidence" value="ECO:0007669"/>
    <property type="project" value="InterPro"/>
</dbReference>
<dbReference type="GO" id="GO:0042732">
    <property type="term" value="P:D-xylose metabolic process"/>
    <property type="evidence" value="ECO:0007669"/>
    <property type="project" value="UniProtKB-KW"/>
</dbReference>
<dbReference type="GO" id="GO:0019569">
    <property type="term" value="P:L-arabinose catabolic process to xylulose 5-phosphate"/>
    <property type="evidence" value="ECO:0007669"/>
    <property type="project" value="UniProtKB-UniPathway"/>
</dbReference>
<dbReference type="GO" id="GO:0006062">
    <property type="term" value="P:sorbitol catabolic process"/>
    <property type="evidence" value="ECO:0007669"/>
    <property type="project" value="TreeGrafter"/>
</dbReference>
<dbReference type="CDD" id="cd05285">
    <property type="entry name" value="sorbitol_DH"/>
    <property type="match status" value="1"/>
</dbReference>
<dbReference type="FunFam" id="3.40.50.720:FF:000068">
    <property type="entry name" value="Sorbitol dehydrogenase"/>
    <property type="match status" value="1"/>
</dbReference>
<dbReference type="Gene3D" id="3.90.180.10">
    <property type="entry name" value="Medium-chain alcohol dehydrogenases, catalytic domain"/>
    <property type="match status" value="1"/>
</dbReference>
<dbReference type="Gene3D" id="3.40.50.720">
    <property type="entry name" value="NAD(P)-binding Rossmann-like Domain"/>
    <property type="match status" value="1"/>
</dbReference>
<dbReference type="InterPro" id="IPR013149">
    <property type="entry name" value="ADH-like_C"/>
</dbReference>
<dbReference type="InterPro" id="IPR013154">
    <property type="entry name" value="ADH-like_N"/>
</dbReference>
<dbReference type="InterPro" id="IPR002328">
    <property type="entry name" value="ADH_Zn_CS"/>
</dbReference>
<dbReference type="InterPro" id="IPR011032">
    <property type="entry name" value="GroES-like_sf"/>
</dbReference>
<dbReference type="InterPro" id="IPR036291">
    <property type="entry name" value="NAD(P)-bd_dom_sf"/>
</dbReference>
<dbReference type="InterPro" id="IPR020843">
    <property type="entry name" value="PKS_ER"/>
</dbReference>
<dbReference type="InterPro" id="IPR045306">
    <property type="entry name" value="SDH-like"/>
</dbReference>
<dbReference type="PANTHER" id="PTHR43161">
    <property type="entry name" value="SORBITOL DEHYDROGENASE"/>
    <property type="match status" value="1"/>
</dbReference>
<dbReference type="PANTHER" id="PTHR43161:SF9">
    <property type="entry name" value="SORBITOL DEHYDROGENASE"/>
    <property type="match status" value="1"/>
</dbReference>
<dbReference type="Pfam" id="PF08240">
    <property type="entry name" value="ADH_N"/>
    <property type="match status" value="1"/>
</dbReference>
<dbReference type="Pfam" id="PF00107">
    <property type="entry name" value="ADH_zinc_N"/>
    <property type="match status" value="1"/>
</dbReference>
<dbReference type="SMART" id="SM00829">
    <property type="entry name" value="PKS_ER"/>
    <property type="match status" value="1"/>
</dbReference>
<dbReference type="SUPFAM" id="SSF50129">
    <property type="entry name" value="GroES-like"/>
    <property type="match status" value="1"/>
</dbReference>
<dbReference type="SUPFAM" id="SSF51735">
    <property type="entry name" value="NAD(P)-binding Rossmann-fold domains"/>
    <property type="match status" value="1"/>
</dbReference>
<dbReference type="PROSITE" id="PS00059">
    <property type="entry name" value="ADH_ZINC"/>
    <property type="match status" value="1"/>
</dbReference>
<organism>
    <name type="scientific">Aspergillus niger</name>
    <dbReference type="NCBI Taxonomy" id="5061"/>
    <lineage>
        <taxon>Eukaryota</taxon>
        <taxon>Fungi</taxon>
        <taxon>Dikarya</taxon>
        <taxon>Ascomycota</taxon>
        <taxon>Pezizomycotina</taxon>
        <taxon>Eurotiomycetes</taxon>
        <taxon>Eurotiomycetidae</taxon>
        <taxon>Eurotiales</taxon>
        <taxon>Aspergillaceae</taxon>
        <taxon>Aspergillus</taxon>
        <taxon>Aspergillus subgen. Circumdati</taxon>
    </lineage>
</organism>
<proteinExistence type="inferred from homology"/>
<protein>
    <recommendedName>
        <fullName>D-xylulose reductase A</fullName>
        <ecNumber>1.1.1.9</ecNumber>
    </recommendedName>
    <alternativeName>
        <fullName>Xylitol dehydrogenase A</fullName>
    </alternativeName>
</protein>
<comment type="function">
    <text evidence="1">Xylitol dehydrogenase which catalyzes the conversion of xylitol to D-xylulose. Xylose is a major component of hemicelluloses such as xylan. Most fungi utilize D-xylose via three enzymatic reactions, xylose reductase (XR), xylitol dehydrogenase (XDH), and xylulokinase, to form xylulose 5-phosphate, which enters pentose phosphate pathway (By similarity).</text>
</comment>
<comment type="catalytic activity">
    <reaction>
        <text>xylitol + NAD(+) = D-xylulose + NADH + H(+)</text>
        <dbReference type="Rhea" id="RHEA:20433"/>
        <dbReference type="ChEBI" id="CHEBI:15378"/>
        <dbReference type="ChEBI" id="CHEBI:17140"/>
        <dbReference type="ChEBI" id="CHEBI:17151"/>
        <dbReference type="ChEBI" id="CHEBI:57540"/>
        <dbReference type="ChEBI" id="CHEBI:57945"/>
        <dbReference type="EC" id="1.1.1.9"/>
    </reaction>
</comment>
<comment type="cofactor">
    <cofactor evidence="1">
        <name>Zn(2+)</name>
        <dbReference type="ChEBI" id="CHEBI:29105"/>
    </cofactor>
    <text evidence="1">Binds 1 zinc ion per subunit.</text>
</comment>
<comment type="pathway">
    <text>Carbohydrate degradation; L-arabinose degradation via L-arabinitol; D-xylulose 5-phosphate from L-arabinose (fungal route): step 4/5.</text>
</comment>
<comment type="similarity">
    <text evidence="3">Belongs to the zinc-containing alcohol dehydrogenase family.</text>
</comment>